<sequence>MKLKRILLSVALLCGIGTTAMADKGMWLLNELNQQNYERMKELGFKLSPEQLYSLGQPSVASAVVIFGGGCTGITVSNEGLIFTNHHCGFGAIQSQSTVDHDYLRDGFRSNNHVEELPIPGLSVRYLREIVDVTPRIEAAVKGAKSEMERMQIIEELSQKINAEYTKGSTVVGEVTPYYAGNKYYVVVYNVFQDVRLVMAPPSSVGKFGGDTDNWMWTRHTGDFSVFRVYADANNNPALYSQNNKPYKPISYAPVSLNGYREGDYAMTIGFPGSTNRYLTSWGVEDVVNNENSPRIEVRGIKQAIWKEAMEADQATRIKYASKYAQSSNYWKNSIGMNRGLKNLDVVNRKRAEEKAFEAWIAKNNSQSTYGHILPGLKADYAKSAAISKDINYLYETLWGGTEIVRLARDVNSVGRIQAADMPKYKGRLEELYKDYLPSLDVKVLPAMLDIVRQRVSADCQPDIFKFIDKKFKGSTEKYAQYVFEKSIVPYADKVKDFLNLPADKQKKILDKDPAVALFNSVLPAIMQAQDKSEEMMLNIEKGKREYFAASRIMDPNRQMPSDANFTMRMSYGSIKGYAPKDGAWYNYYTTEQGVFEKQDPTSSEFAVQPEILSLLRSKDFGQYGVGDHLRLCFLSDNDITGGNSGSPVFNGNGELIGLAFDGNWEAMSGDIEFEPDLQRTISVDIRYVLFMIDKWAKMPHLIKELNLVKGDQRDLMPAGKGGNCSHKKAQTCAKKECSKGKKCAEKSATCISAMKDGKPCKTEKACAAGQKSAEKKANCCSTMKDGKPCTGDKDCAKSGKACCGKNKEAAAKKASKK</sequence>
<keyword id="KW-0031">Aminopeptidase</keyword>
<keyword id="KW-0378">Hydrolase</keyword>
<keyword id="KW-0645">Protease</keyword>
<keyword id="KW-1185">Reference proteome</keyword>
<keyword id="KW-0720">Serine protease</keyword>
<keyword id="KW-0732">Signal</keyword>
<accession>C3JAQ3</accession>
<proteinExistence type="evidence at protein level"/>
<gene>
    <name evidence="5" type="primary">dpp7</name>
    <name evidence="7" type="ORF">POREN0001_0291</name>
</gene>
<name>DPP7_POREA</name>
<organism>
    <name type="scientific">Porphyromonas endodontalis (strain ATCC 35406 / DSM 24491 / JCM 8526 / CCUG 16442 / BCRC 14492 / NCTC 13058 / HG 370)</name>
    <name type="common">Bacteroides endodontalis</name>
    <dbReference type="NCBI Taxonomy" id="553175"/>
    <lineage>
        <taxon>Bacteria</taxon>
        <taxon>Pseudomonadati</taxon>
        <taxon>Bacteroidota</taxon>
        <taxon>Bacteroidia</taxon>
        <taxon>Bacteroidales</taxon>
        <taxon>Porphyromonadaceae</taxon>
        <taxon>Porphyromonas</taxon>
    </lineage>
</organism>
<evidence type="ECO:0000250" key="1">
    <source>
        <dbReference type="UniProtKB" id="B2RKV3"/>
    </source>
</evidence>
<evidence type="ECO:0000250" key="2">
    <source>
        <dbReference type="UniProtKB" id="V5YM14"/>
    </source>
</evidence>
<evidence type="ECO:0000255" key="3"/>
<evidence type="ECO:0000269" key="4">
    <source>
    </source>
</evidence>
<evidence type="ECO:0000303" key="5">
    <source>
    </source>
</evidence>
<evidence type="ECO:0000305" key="6"/>
<evidence type="ECO:0000312" key="7">
    <source>
        <dbReference type="EMBL" id="EEN82793.1"/>
    </source>
</evidence>
<feature type="signal peptide" evidence="3">
    <location>
        <begin position="1"/>
        <end position="22"/>
    </location>
</feature>
<feature type="chain" id="PRO_5002928037" description="Dipeptidyl-peptidase 7">
    <location>
        <begin position="23"/>
        <end position="818"/>
    </location>
</feature>
<feature type="active site" description="Charge relay system" evidence="2">
    <location>
        <position position="87"/>
    </location>
</feature>
<feature type="active site" description="Charge relay system" evidence="2">
    <location>
        <position position="223"/>
    </location>
</feature>
<feature type="active site" description="Charge relay system" evidence="2">
    <location>
        <position position="645"/>
    </location>
</feature>
<feature type="site" description="Critical for substrate specificity of DPP7" evidence="1">
    <location>
        <position position="663"/>
    </location>
</feature>
<comment type="function">
    <text evidence="4">Catalyzes the removal of dipeptides from the N-terminus of oligopeptides. Most efficiently cleaves the synthetic substrate Met-Leu-methylcoumaryl-7-amide (Met-Leu-MCA), and slowly hydrolyzes Leu-Gln-, Lys-Ala-, Leu-Arg, and Ala-Asn-MCA. Is likely involved in amino acid metabolism and bacterial growth/survival of asaccharolytic P.endodontalis, that utilizes amino acids from extracellular proteinaceous nutrients as energy and carbon sources.</text>
</comment>
<comment type="domain">
    <text evidence="4">The C-terminal Lys-rich domain (711-818) is dispensable for the proteolytic activity.</text>
</comment>
<comment type="similarity">
    <text evidence="6">Belongs to the peptidase S46 family.</text>
</comment>
<protein>
    <recommendedName>
        <fullName evidence="5">Dipeptidyl-peptidase 7</fullName>
        <shortName evidence="5">DPP7</shortName>
        <ecNumber evidence="4">3.4.14.-</ecNumber>
    </recommendedName>
    <alternativeName>
        <fullName evidence="5">MER278904</fullName>
    </alternativeName>
</protein>
<reference key="1">
    <citation type="submission" date="2009-04" db="EMBL/GenBank/DDBJ databases">
        <authorList>
            <person name="Sebastian Y."/>
            <person name="Madupu R."/>
            <person name="Durkin A.S."/>
            <person name="Torralba M."/>
            <person name="Methe B."/>
            <person name="Sutton G.G."/>
            <person name="Strausberg R.L."/>
            <person name="Nelson K.E."/>
        </authorList>
    </citation>
    <scope>NUCLEOTIDE SEQUENCE [LARGE SCALE GENOMIC DNA]</scope>
    <source>
        <strain>ATCC 35406 / DSM 24491 / JCM 8526 / CCUG 16442 / BCRC 14492 / NCTC 13058 / HG 370</strain>
    </source>
</reference>
<reference key="2">
    <citation type="journal article" date="2014" name="PLoS ONE">
        <title>Identification of dipeptidyl-peptidase (DPP)5 and DPP7 in Porphyromonas endodontalis, distinct from those in Porphyromonas gingivalis.</title>
        <authorList>
            <person name="Nishimata H."/>
            <person name="Ohara-Nemoto Y."/>
            <person name="Baba T.T."/>
            <person name="Hoshino T."/>
            <person name="Fujiwara T."/>
            <person name="Shimoyama Y."/>
            <person name="Kimura S."/>
            <person name="Nemoto T.K."/>
        </authorList>
    </citation>
    <scope>IDENTIFICATION</scope>
    <scope>FUNCTION</scope>
    <scope>CATALYTIC ACTIVITY</scope>
    <scope>SUBSTRATE SPECIFICITY</scope>
    <scope>BIOPHYSICOCHEMICAL PROPERTIES</scope>
    <scope>DOMAIN</scope>
    <source>
        <strain>ATCC 35406 / DSM 24491 / JCM 8526 / CCUG 16442 / BCRC 14492 / NCTC 13058 / HG 370</strain>
    </source>
</reference>
<dbReference type="EC" id="3.4.14.-" evidence="4"/>
<dbReference type="EMBL" id="ACNN01000020">
    <property type="protein sequence ID" value="EEN82793.1"/>
    <property type="molecule type" value="Genomic_DNA"/>
</dbReference>
<dbReference type="SMR" id="C3JAQ3"/>
<dbReference type="STRING" id="553175.POREN0001_0291"/>
<dbReference type="eggNOG" id="COG3591">
    <property type="taxonomic scope" value="Bacteria"/>
</dbReference>
<dbReference type="Proteomes" id="UP000004295">
    <property type="component" value="Unassembled WGS sequence"/>
</dbReference>
<dbReference type="GO" id="GO:0008239">
    <property type="term" value="F:dipeptidyl-peptidase activity"/>
    <property type="evidence" value="ECO:0000314"/>
    <property type="project" value="UniProtKB"/>
</dbReference>
<dbReference type="GO" id="GO:0070009">
    <property type="term" value="F:serine-type aminopeptidase activity"/>
    <property type="evidence" value="ECO:0007669"/>
    <property type="project" value="InterPro"/>
</dbReference>
<dbReference type="GO" id="GO:0043171">
    <property type="term" value="P:peptide catabolic process"/>
    <property type="evidence" value="ECO:0000314"/>
    <property type="project" value="UniProtKB"/>
</dbReference>
<dbReference type="GO" id="GO:0006508">
    <property type="term" value="P:proteolysis"/>
    <property type="evidence" value="ECO:0007669"/>
    <property type="project" value="UniProtKB-KW"/>
</dbReference>
<dbReference type="Gene3D" id="2.40.10.10">
    <property type="entry name" value="Trypsin-like serine proteases"/>
    <property type="match status" value="1"/>
</dbReference>
<dbReference type="InterPro" id="IPR019500">
    <property type="entry name" value="Pep_S46"/>
</dbReference>
<dbReference type="InterPro" id="IPR009003">
    <property type="entry name" value="Peptidase_S1_PA"/>
</dbReference>
<dbReference type="InterPro" id="IPR043504">
    <property type="entry name" value="Peptidase_S1_PA_chymotrypsin"/>
</dbReference>
<dbReference type="PANTHER" id="PTHR38469">
    <property type="entry name" value="PERIPLASMIC PEPTIDASE SUBFAMILY S1B"/>
    <property type="match status" value="1"/>
</dbReference>
<dbReference type="PANTHER" id="PTHR38469:SF1">
    <property type="entry name" value="PERIPLASMIC PEPTIDASE SUBFAMILY S1B"/>
    <property type="match status" value="1"/>
</dbReference>
<dbReference type="Pfam" id="PF10459">
    <property type="entry name" value="Peptidase_S46"/>
    <property type="match status" value="1"/>
</dbReference>
<dbReference type="SUPFAM" id="SSF50494">
    <property type="entry name" value="Trypsin-like serine proteases"/>
    <property type="match status" value="1"/>
</dbReference>